<gene>
    <name type="primary">AKAP10</name>
</gene>
<comment type="function">
    <text evidence="1">Differentially targeted protein that binds to type I and II regulatory subunits of protein kinase A and anchors them to the mitochondria or the plasma membrane. Although the physiological relevance between PKA and AKAPS with mitochondria is not fully understood, one idea is that BAD, a proapoptotic member, is phosphorylated and inactivated by mitochondria-anchored PKA. It cannot be excluded too that it may facilitate PKA as well as G protein signal transduction, by acting as an adapter for assembling multiprotein complexes. With its RGS domain, it could lead to the interaction to G-alpha proteins, providing a link between the signaling machinery and the downstream kinase (By similarity).</text>
</comment>
<comment type="subcellular location">
    <subcellularLocation>
        <location evidence="1">Mitochondrion</location>
    </subcellularLocation>
    <subcellularLocation>
        <location evidence="1">Membrane</location>
    </subcellularLocation>
    <subcellularLocation>
        <location evidence="1">Cytoplasm</location>
    </subcellularLocation>
    <text evidence="1">Predominantly mitochondrial but also membrane associated and cytoplasmic.</text>
</comment>
<comment type="domain">
    <text>RII-alpha binding site, predicted to form an amphipathic helix, could participate in protein-protein interactions with a complementary surface on the R-subunit dimer.</text>
</comment>
<comment type="sequence caution" evidence="6">
    <conflict type="erroneous initiation">
        <sequence resource="EMBL-CDS" id="AAG35731"/>
    </conflict>
</comment>
<keyword id="KW-0963">Cytoplasm</keyword>
<keyword id="KW-0472">Membrane</keyword>
<keyword id="KW-0496">Mitochondrion</keyword>
<keyword id="KW-0597">Phosphoprotein</keyword>
<keyword id="KW-1185">Reference proteome</keyword>
<keyword id="KW-0677">Repeat</keyword>
<keyword id="KW-0809">Transit peptide</keyword>
<organism>
    <name type="scientific">Sus scrofa</name>
    <name type="common">Pig</name>
    <dbReference type="NCBI Taxonomy" id="9823"/>
    <lineage>
        <taxon>Eukaryota</taxon>
        <taxon>Metazoa</taxon>
        <taxon>Chordata</taxon>
        <taxon>Craniata</taxon>
        <taxon>Vertebrata</taxon>
        <taxon>Euteleostomi</taxon>
        <taxon>Mammalia</taxon>
        <taxon>Eutheria</taxon>
        <taxon>Laurasiatheria</taxon>
        <taxon>Artiodactyla</taxon>
        <taxon>Suina</taxon>
        <taxon>Suidae</taxon>
        <taxon>Sus</taxon>
    </lineage>
</organism>
<name>AKA10_PIG</name>
<protein>
    <recommendedName>
        <fullName>A-kinase anchor protein 10, mitochondrial</fullName>
        <shortName>AKAP-10</shortName>
    </recommendedName>
    <alternativeName>
        <fullName>Dual specificity A kinase-anchoring protein 2</fullName>
        <shortName>D-AKAP-2</shortName>
    </alternativeName>
    <alternativeName>
        <fullName>Protein kinase A-anchoring protein 10</fullName>
        <shortName>PRKA10</shortName>
    </alternativeName>
</protein>
<feature type="transit peptide" description="Mitochondrion" evidence="3">
    <location>
        <begin position="1" status="less than"/>
        <end position="16"/>
    </location>
</feature>
<feature type="chain" id="PRO_0000030406" description="A-kinase anchor protein 10, mitochondrial">
    <location>
        <begin position="17"/>
        <end position="650"/>
    </location>
</feature>
<feature type="domain" description="RGS 1" evidence="4">
    <location>
        <begin position="113"/>
        <end position="356"/>
    </location>
</feature>
<feature type="domain" description="RGS 2" evidence="4">
    <location>
        <begin position="366"/>
        <end position="493"/>
    </location>
</feature>
<feature type="region of interest" description="Disordered" evidence="5">
    <location>
        <begin position="1"/>
        <end position="45"/>
    </location>
</feature>
<feature type="region of interest" description="Disordered" evidence="5">
    <location>
        <begin position="168"/>
        <end position="192"/>
    </location>
</feature>
<feature type="region of interest" description="Disordered" evidence="5">
    <location>
        <begin position="512"/>
        <end position="535"/>
    </location>
</feature>
<feature type="region of interest" description="PKA-RII subunit binding">
    <location>
        <begin position="622"/>
        <end position="635"/>
    </location>
</feature>
<feature type="compositionally biased region" description="Low complexity" evidence="5">
    <location>
        <begin position="525"/>
        <end position="535"/>
    </location>
</feature>
<feature type="modified residue" description="Phosphoserine" evidence="2">
    <location>
        <position position="40"/>
    </location>
</feature>
<feature type="modified residue" description="Phosphoserine" evidence="2">
    <location>
        <position position="268"/>
    </location>
</feature>
<feature type="non-terminal residue">
    <location>
        <position position="1"/>
    </location>
</feature>
<evidence type="ECO:0000250" key="1"/>
<evidence type="ECO:0000250" key="2">
    <source>
        <dbReference type="UniProtKB" id="O43572"/>
    </source>
</evidence>
<evidence type="ECO:0000255" key="3"/>
<evidence type="ECO:0000255" key="4">
    <source>
        <dbReference type="PROSITE-ProRule" id="PRU00171"/>
    </source>
</evidence>
<evidence type="ECO:0000256" key="5">
    <source>
        <dbReference type="SAM" id="MobiDB-lite"/>
    </source>
</evidence>
<evidence type="ECO:0000305" key="6"/>
<sequence length="650" mass="71704">RALRPDPGPAMSFFRRKARGREQEKTSDVPSGKASISVHSPQKSTKNHALLEAAGPSPVAISAISANMDSFSRSRTATLKKQPSHMEAAHFGDLGRSCLDYQAQETKSSLSKTLEQVLRDAVVLPYFIQFMELRRMEHLVKFWLEAESFHSTTWSRIRAHSLNTVKQSSLAEPVSPTQKHETAAAPVTESLDQRLEEPSSAQLLLTQSEGIDLTDRTSNTQNHLLLSPECDGARALHPAAARTGARRASLEPQESCRLTVASRNSPSSPLKEVSGKLMKSIEQDAVNTFTKYISPDAAKPIPITEAMRNDIIAKICGEDGQVDPNCFVLAQSIVFSAMEQEHFSEFLRSHHFCKYQIEVLTSGTVYLADILFCESALFYSSEYMEKEDAVNILQFWLAADNFQSQPAAKKGQYDGQEAQNDAMILYDKYFSLQATHPLGFDDVVRLEIESNNICREGGPLPNCFTTPLRQAWTTMEKVFLPGFLSSSLYYKYLNDLIHSVRGDEFLGASASLAAQGSGGPPDDPLPGASDPSASQSSVKKASVKILKNFDEAIIVDAASLDPESLYQRTYAGKMTFGRVSDLGQFIRESEPEPDVKKSKGSMFSQAMKKWVQGNSDEAQEELAWKIAKMIVSDVMQQAQCAQPGETSAKL</sequence>
<accession>P57770</accession>
<reference key="1">
    <citation type="submission" date="1999-11" db="EMBL/GenBank/DDBJ databases">
        <title>Sus scrofa protein kinase A anchoring protein with an RGS domain.</title>
        <authorList>
            <person name="Rao T.V.S."/>
            <person name="Knox C."/>
            <person name="Wileman T."/>
            <person name="Miskin J."/>
            <person name="Ryan M."/>
        </authorList>
    </citation>
    <scope>NUCLEOTIDE SEQUENCE [MRNA]</scope>
    <source>
        <tissue>Kidney</tissue>
    </source>
</reference>
<proteinExistence type="evidence at transcript level"/>
<dbReference type="EMBL" id="AF208387">
    <property type="protein sequence ID" value="AAG35731.1"/>
    <property type="status" value="ALT_INIT"/>
    <property type="molecule type" value="mRNA"/>
</dbReference>
<dbReference type="RefSeq" id="NP_999303.1">
    <property type="nucleotide sequence ID" value="NM_214138.1"/>
</dbReference>
<dbReference type="SMR" id="P57770"/>
<dbReference type="FunCoup" id="P57770">
    <property type="interactions" value="2867"/>
</dbReference>
<dbReference type="STRING" id="9823.ENSSSCP00000020144"/>
<dbReference type="PaxDb" id="9823-ENSSSCP00000020144"/>
<dbReference type="PeptideAtlas" id="P57770"/>
<dbReference type="GeneID" id="397262"/>
<dbReference type="KEGG" id="ssc:397262"/>
<dbReference type="CTD" id="11216"/>
<dbReference type="eggNOG" id="KOG3590">
    <property type="taxonomic scope" value="Eukaryota"/>
</dbReference>
<dbReference type="HOGENOM" id="CLU_992263_0_0_1"/>
<dbReference type="InParanoid" id="P57770"/>
<dbReference type="OrthoDB" id="5584247at2759"/>
<dbReference type="Proteomes" id="UP000008227">
    <property type="component" value="Unplaced"/>
</dbReference>
<dbReference type="Proteomes" id="UP000314985">
    <property type="component" value="Unplaced"/>
</dbReference>
<dbReference type="Proteomes" id="UP000694570">
    <property type="component" value="Unplaced"/>
</dbReference>
<dbReference type="Proteomes" id="UP000694571">
    <property type="component" value="Unplaced"/>
</dbReference>
<dbReference type="Proteomes" id="UP000694720">
    <property type="component" value="Unplaced"/>
</dbReference>
<dbReference type="Proteomes" id="UP000694722">
    <property type="component" value="Unplaced"/>
</dbReference>
<dbReference type="Proteomes" id="UP000694723">
    <property type="component" value="Unplaced"/>
</dbReference>
<dbReference type="Proteomes" id="UP000694724">
    <property type="component" value="Unplaced"/>
</dbReference>
<dbReference type="Proteomes" id="UP000694725">
    <property type="component" value="Unplaced"/>
</dbReference>
<dbReference type="Proteomes" id="UP000694726">
    <property type="component" value="Unplaced"/>
</dbReference>
<dbReference type="Proteomes" id="UP000694727">
    <property type="component" value="Unplaced"/>
</dbReference>
<dbReference type="Proteomes" id="UP000694728">
    <property type="component" value="Unplaced"/>
</dbReference>
<dbReference type="GO" id="GO:0005739">
    <property type="term" value="C:mitochondrion"/>
    <property type="evidence" value="ECO:0000318"/>
    <property type="project" value="GO_Central"/>
</dbReference>
<dbReference type="GO" id="GO:0005886">
    <property type="term" value="C:plasma membrane"/>
    <property type="evidence" value="ECO:0000318"/>
    <property type="project" value="GO_Central"/>
</dbReference>
<dbReference type="GO" id="GO:0051018">
    <property type="term" value="F:protein kinase A binding"/>
    <property type="evidence" value="ECO:0007669"/>
    <property type="project" value="InterPro"/>
</dbReference>
<dbReference type="GO" id="GO:0008104">
    <property type="term" value="P:protein localization"/>
    <property type="evidence" value="ECO:0000318"/>
    <property type="project" value="GO_Central"/>
</dbReference>
<dbReference type="CDD" id="cd12804">
    <property type="entry name" value="AKAP10_AKB"/>
    <property type="match status" value="1"/>
</dbReference>
<dbReference type="CDD" id="cd08735">
    <property type="entry name" value="RGS_AKAP2_1"/>
    <property type="match status" value="1"/>
</dbReference>
<dbReference type="CDD" id="cd08721">
    <property type="entry name" value="RGS_AKAP2_2"/>
    <property type="match status" value="1"/>
</dbReference>
<dbReference type="FunFam" id="1.10.167.10:FF:000018">
    <property type="entry name" value="A-kinase anchor protein 10, mitochondrial"/>
    <property type="match status" value="1"/>
</dbReference>
<dbReference type="FunFam" id="1.10.167.10:FF:000022">
    <property type="entry name" value="A-kinase anchor protein 10, mitochondrial"/>
    <property type="match status" value="1"/>
</dbReference>
<dbReference type="FunFam" id="1.10.167.10:FF:000005">
    <property type="entry name" value="Putative A-kinase anchor protein 10 mitochondrial"/>
    <property type="match status" value="1"/>
</dbReference>
<dbReference type="Gene3D" id="1.10.167.10">
    <property type="entry name" value="Regulator of G-protein Signalling 4, domain 2"/>
    <property type="match status" value="3"/>
</dbReference>
<dbReference type="InterPro" id="IPR037719">
    <property type="entry name" value="AKAP10_AKB_dom"/>
</dbReference>
<dbReference type="InterPro" id="IPR052246">
    <property type="entry name" value="Cell_Polariz_PKAAnc"/>
</dbReference>
<dbReference type="InterPro" id="IPR016137">
    <property type="entry name" value="RGS"/>
</dbReference>
<dbReference type="InterPro" id="IPR036305">
    <property type="entry name" value="RGS_sf"/>
</dbReference>
<dbReference type="InterPro" id="IPR044926">
    <property type="entry name" value="RGS_subdomain_2"/>
</dbReference>
<dbReference type="PANTHER" id="PTHR13155:SF1">
    <property type="entry name" value="A-KINASE ANCHOR PROTEIN 10, MITOCHONDRIAL"/>
    <property type="match status" value="1"/>
</dbReference>
<dbReference type="PANTHER" id="PTHR13155">
    <property type="entry name" value="A-KINASE ANCHOR PROTEINS"/>
    <property type="match status" value="1"/>
</dbReference>
<dbReference type="Pfam" id="PF00615">
    <property type="entry name" value="RGS"/>
    <property type="match status" value="2"/>
</dbReference>
<dbReference type="SMART" id="SM00315">
    <property type="entry name" value="RGS"/>
    <property type="match status" value="2"/>
</dbReference>
<dbReference type="SUPFAM" id="SSF48097">
    <property type="entry name" value="Regulator of G-protein signaling, RGS"/>
    <property type="match status" value="2"/>
</dbReference>
<dbReference type="PROSITE" id="PS50132">
    <property type="entry name" value="RGS"/>
    <property type="match status" value="2"/>
</dbReference>